<evidence type="ECO:0000255" key="1">
    <source>
        <dbReference type="PROSITE-ProRule" id="PRU00160"/>
    </source>
</evidence>
<evidence type="ECO:0000255" key="2">
    <source>
        <dbReference type="PROSITE-ProRule" id="PRU00173"/>
    </source>
</evidence>
<evidence type="ECO:0000255" key="3">
    <source>
        <dbReference type="PROSITE-ProRule" id="PRU10044"/>
    </source>
</evidence>
<evidence type="ECO:0000269" key="4">
    <source>
    </source>
</evidence>
<evidence type="ECO:0000269" key="5">
    <source>
    </source>
</evidence>
<evidence type="ECO:0000269" key="6">
    <source>
    </source>
</evidence>
<evidence type="ECO:0000269" key="7">
    <source>
    </source>
</evidence>
<evidence type="ECO:0000269" key="8">
    <source>
    </source>
</evidence>
<evidence type="ECO:0000269" key="9">
    <source>
    </source>
</evidence>
<evidence type="ECO:0000303" key="10">
    <source>
    </source>
</evidence>
<evidence type="ECO:0000303" key="11">
    <source>
    </source>
</evidence>
<evidence type="ECO:0000305" key="12"/>
<evidence type="ECO:0000305" key="13">
    <source>
    </source>
</evidence>
<evidence type="ECO:0000305" key="14">
    <source>
    </source>
</evidence>
<evidence type="ECO:0007829" key="15">
    <source>
        <dbReference type="PDB" id="1ZZW"/>
    </source>
</evidence>
<evidence type="ECO:0007829" key="16">
    <source>
        <dbReference type="PDB" id="2OUC"/>
    </source>
</evidence>
<evidence type="ECO:0007829" key="17">
    <source>
        <dbReference type="PDB" id="2OUD"/>
    </source>
</evidence>
<evidence type="ECO:0007829" key="18">
    <source>
        <dbReference type="PDB" id="3TG1"/>
    </source>
</evidence>
<reference key="1">
    <citation type="journal article" date="1999" name="J. Biol. Chem.">
        <title>Molecular cloning and characterization of a novel dual specificity phosphatase, MKP-5.</title>
        <authorList>
            <person name="Tanoue T."/>
            <person name="Moriguchi T."/>
            <person name="Nishida E."/>
        </authorList>
    </citation>
    <scope>NUCLEOTIDE SEQUENCE [MRNA] (ISOFORM 1)</scope>
    <scope>FUNCTION</scope>
</reference>
<reference key="2">
    <citation type="journal article" date="1999" name="Oncogene">
        <title>MKP5, a new member of the MAP kinase phosphatase family, which selectively dephosphorylates stress-activated kinases.</title>
        <authorList>
            <person name="Theodosiou A."/>
            <person name="Smith A."/>
            <person name="Gillieron C."/>
            <person name="Arkinstall S."/>
            <person name="Ashworth A."/>
        </authorList>
    </citation>
    <scope>NUCLEOTIDE SEQUENCE [MRNA] (ISOFORM 1)</scope>
    <scope>FUNCTION</scope>
</reference>
<reference key="3">
    <citation type="journal article" date="2004" name="Nat. Genet.">
        <title>Complete sequencing and characterization of 21,243 full-length human cDNAs.</title>
        <authorList>
            <person name="Ota T."/>
            <person name="Suzuki Y."/>
            <person name="Nishikawa T."/>
            <person name="Otsuki T."/>
            <person name="Sugiyama T."/>
            <person name="Irie R."/>
            <person name="Wakamatsu A."/>
            <person name="Hayashi K."/>
            <person name="Sato H."/>
            <person name="Nagai K."/>
            <person name="Kimura K."/>
            <person name="Makita H."/>
            <person name="Sekine M."/>
            <person name="Obayashi M."/>
            <person name="Nishi T."/>
            <person name="Shibahara T."/>
            <person name="Tanaka T."/>
            <person name="Ishii S."/>
            <person name="Yamamoto J."/>
            <person name="Saito K."/>
            <person name="Kawai Y."/>
            <person name="Isono Y."/>
            <person name="Nakamura Y."/>
            <person name="Nagahari K."/>
            <person name="Murakami K."/>
            <person name="Yasuda T."/>
            <person name="Iwayanagi T."/>
            <person name="Wagatsuma M."/>
            <person name="Shiratori A."/>
            <person name="Sudo H."/>
            <person name="Hosoiri T."/>
            <person name="Kaku Y."/>
            <person name="Kodaira H."/>
            <person name="Kondo H."/>
            <person name="Sugawara M."/>
            <person name="Takahashi M."/>
            <person name="Kanda K."/>
            <person name="Yokoi T."/>
            <person name="Furuya T."/>
            <person name="Kikkawa E."/>
            <person name="Omura Y."/>
            <person name="Abe K."/>
            <person name="Kamihara K."/>
            <person name="Katsuta N."/>
            <person name="Sato K."/>
            <person name="Tanikawa M."/>
            <person name="Yamazaki M."/>
            <person name="Ninomiya K."/>
            <person name="Ishibashi T."/>
            <person name="Yamashita H."/>
            <person name="Murakawa K."/>
            <person name="Fujimori K."/>
            <person name="Tanai H."/>
            <person name="Kimata M."/>
            <person name="Watanabe M."/>
            <person name="Hiraoka S."/>
            <person name="Chiba Y."/>
            <person name="Ishida S."/>
            <person name="Ono Y."/>
            <person name="Takiguchi S."/>
            <person name="Watanabe S."/>
            <person name="Yosida M."/>
            <person name="Hotuta T."/>
            <person name="Kusano J."/>
            <person name="Kanehori K."/>
            <person name="Takahashi-Fujii A."/>
            <person name="Hara H."/>
            <person name="Tanase T.-O."/>
            <person name="Nomura Y."/>
            <person name="Togiya S."/>
            <person name="Komai F."/>
            <person name="Hara R."/>
            <person name="Takeuchi K."/>
            <person name="Arita M."/>
            <person name="Imose N."/>
            <person name="Musashino K."/>
            <person name="Yuuki H."/>
            <person name="Oshima A."/>
            <person name="Sasaki N."/>
            <person name="Aotsuka S."/>
            <person name="Yoshikawa Y."/>
            <person name="Matsunawa H."/>
            <person name="Ichihara T."/>
            <person name="Shiohata N."/>
            <person name="Sano S."/>
            <person name="Moriya S."/>
            <person name="Momiyama H."/>
            <person name="Satoh N."/>
            <person name="Takami S."/>
            <person name="Terashima Y."/>
            <person name="Suzuki O."/>
            <person name="Nakagawa S."/>
            <person name="Senoh A."/>
            <person name="Mizoguchi H."/>
            <person name="Goto Y."/>
            <person name="Shimizu F."/>
            <person name="Wakebe H."/>
            <person name="Hishigaki H."/>
            <person name="Watanabe T."/>
            <person name="Sugiyama A."/>
            <person name="Takemoto M."/>
            <person name="Kawakami B."/>
            <person name="Yamazaki M."/>
            <person name="Watanabe K."/>
            <person name="Kumagai A."/>
            <person name="Itakura S."/>
            <person name="Fukuzumi Y."/>
            <person name="Fujimori Y."/>
            <person name="Komiyama M."/>
            <person name="Tashiro H."/>
            <person name="Tanigami A."/>
            <person name="Fujiwara T."/>
            <person name="Ono T."/>
            <person name="Yamada K."/>
            <person name="Fujii Y."/>
            <person name="Ozaki K."/>
            <person name="Hirao M."/>
            <person name="Ohmori Y."/>
            <person name="Kawabata A."/>
            <person name="Hikiji T."/>
            <person name="Kobatake N."/>
            <person name="Inagaki H."/>
            <person name="Ikema Y."/>
            <person name="Okamoto S."/>
            <person name="Okitani R."/>
            <person name="Kawakami T."/>
            <person name="Noguchi S."/>
            <person name="Itoh T."/>
            <person name="Shigeta K."/>
            <person name="Senba T."/>
            <person name="Matsumura K."/>
            <person name="Nakajima Y."/>
            <person name="Mizuno T."/>
            <person name="Morinaga M."/>
            <person name="Sasaki M."/>
            <person name="Togashi T."/>
            <person name="Oyama M."/>
            <person name="Hata H."/>
            <person name="Watanabe M."/>
            <person name="Komatsu T."/>
            <person name="Mizushima-Sugano J."/>
            <person name="Satoh T."/>
            <person name="Shirai Y."/>
            <person name="Takahashi Y."/>
            <person name="Nakagawa K."/>
            <person name="Okumura K."/>
            <person name="Nagase T."/>
            <person name="Nomura N."/>
            <person name="Kikuchi H."/>
            <person name="Masuho Y."/>
            <person name="Yamashita R."/>
            <person name="Nakai K."/>
            <person name="Yada T."/>
            <person name="Nakamura Y."/>
            <person name="Ohara O."/>
            <person name="Isogai T."/>
            <person name="Sugano S."/>
        </authorList>
    </citation>
    <scope>NUCLEOTIDE SEQUENCE [LARGE SCALE MRNA] (ISOFORM 2)</scope>
</reference>
<reference key="4">
    <citation type="journal article" date="2006" name="Nature">
        <title>The DNA sequence and biological annotation of human chromosome 1.</title>
        <authorList>
            <person name="Gregory S.G."/>
            <person name="Barlow K.F."/>
            <person name="McLay K.E."/>
            <person name="Kaul R."/>
            <person name="Swarbreck D."/>
            <person name="Dunham A."/>
            <person name="Scott C.E."/>
            <person name="Howe K.L."/>
            <person name="Woodfine K."/>
            <person name="Spencer C.C.A."/>
            <person name="Jones M.C."/>
            <person name="Gillson C."/>
            <person name="Searle S."/>
            <person name="Zhou Y."/>
            <person name="Kokocinski F."/>
            <person name="McDonald L."/>
            <person name="Evans R."/>
            <person name="Phillips K."/>
            <person name="Atkinson A."/>
            <person name="Cooper R."/>
            <person name="Jones C."/>
            <person name="Hall R.E."/>
            <person name="Andrews T.D."/>
            <person name="Lloyd C."/>
            <person name="Ainscough R."/>
            <person name="Almeida J.P."/>
            <person name="Ambrose K.D."/>
            <person name="Anderson F."/>
            <person name="Andrew R.W."/>
            <person name="Ashwell R.I.S."/>
            <person name="Aubin K."/>
            <person name="Babbage A.K."/>
            <person name="Bagguley C.L."/>
            <person name="Bailey J."/>
            <person name="Beasley H."/>
            <person name="Bethel G."/>
            <person name="Bird C.P."/>
            <person name="Bray-Allen S."/>
            <person name="Brown J.Y."/>
            <person name="Brown A.J."/>
            <person name="Buckley D."/>
            <person name="Burton J."/>
            <person name="Bye J."/>
            <person name="Carder C."/>
            <person name="Chapman J.C."/>
            <person name="Clark S.Y."/>
            <person name="Clarke G."/>
            <person name="Clee C."/>
            <person name="Cobley V."/>
            <person name="Collier R.E."/>
            <person name="Corby N."/>
            <person name="Coville G.J."/>
            <person name="Davies J."/>
            <person name="Deadman R."/>
            <person name="Dunn M."/>
            <person name="Earthrowl M."/>
            <person name="Ellington A.G."/>
            <person name="Errington H."/>
            <person name="Frankish A."/>
            <person name="Frankland J."/>
            <person name="French L."/>
            <person name="Garner P."/>
            <person name="Garnett J."/>
            <person name="Gay L."/>
            <person name="Ghori M.R.J."/>
            <person name="Gibson R."/>
            <person name="Gilby L.M."/>
            <person name="Gillett W."/>
            <person name="Glithero R.J."/>
            <person name="Grafham D.V."/>
            <person name="Griffiths C."/>
            <person name="Griffiths-Jones S."/>
            <person name="Grocock R."/>
            <person name="Hammond S."/>
            <person name="Harrison E.S.I."/>
            <person name="Hart E."/>
            <person name="Haugen E."/>
            <person name="Heath P.D."/>
            <person name="Holmes S."/>
            <person name="Holt K."/>
            <person name="Howden P.J."/>
            <person name="Hunt A.R."/>
            <person name="Hunt S.E."/>
            <person name="Hunter G."/>
            <person name="Isherwood J."/>
            <person name="James R."/>
            <person name="Johnson C."/>
            <person name="Johnson D."/>
            <person name="Joy A."/>
            <person name="Kay M."/>
            <person name="Kershaw J.K."/>
            <person name="Kibukawa M."/>
            <person name="Kimberley A.M."/>
            <person name="King A."/>
            <person name="Knights A.J."/>
            <person name="Lad H."/>
            <person name="Laird G."/>
            <person name="Lawlor S."/>
            <person name="Leongamornlert D.A."/>
            <person name="Lloyd D.M."/>
            <person name="Loveland J."/>
            <person name="Lovell J."/>
            <person name="Lush M.J."/>
            <person name="Lyne R."/>
            <person name="Martin S."/>
            <person name="Mashreghi-Mohammadi M."/>
            <person name="Matthews L."/>
            <person name="Matthews N.S.W."/>
            <person name="McLaren S."/>
            <person name="Milne S."/>
            <person name="Mistry S."/>
            <person name="Moore M.J.F."/>
            <person name="Nickerson T."/>
            <person name="O'Dell C.N."/>
            <person name="Oliver K."/>
            <person name="Palmeiri A."/>
            <person name="Palmer S.A."/>
            <person name="Parker A."/>
            <person name="Patel D."/>
            <person name="Pearce A.V."/>
            <person name="Peck A.I."/>
            <person name="Pelan S."/>
            <person name="Phelps K."/>
            <person name="Phillimore B.J."/>
            <person name="Plumb R."/>
            <person name="Rajan J."/>
            <person name="Raymond C."/>
            <person name="Rouse G."/>
            <person name="Saenphimmachak C."/>
            <person name="Sehra H.K."/>
            <person name="Sheridan E."/>
            <person name="Shownkeen R."/>
            <person name="Sims S."/>
            <person name="Skuce C.D."/>
            <person name="Smith M."/>
            <person name="Steward C."/>
            <person name="Subramanian S."/>
            <person name="Sycamore N."/>
            <person name="Tracey A."/>
            <person name="Tromans A."/>
            <person name="Van Helmond Z."/>
            <person name="Wall M."/>
            <person name="Wallis J.M."/>
            <person name="White S."/>
            <person name="Whitehead S.L."/>
            <person name="Wilkinson J.E."/>
            <person name="Willey D.L."/>
            <person name="Williams H."/>
            <person name="Wilming L."/>
            <person name="Wray P.W."/>
            <person name="Wu Z."/>
            <person name="Coulson A."/>
            <person name="Vaudin M."/>
            <person name="Sulston J.E."/>
            <person name="Durbin R.M."/>
            <person name="Hubbard T."/>
            <person name="Wooster R."/>
            <person name="Dunham I."/>
            <person name="Carter N.P."/>
            <person name="McVean G."/>
            <person name="Ross M.T."/>
            <person name="Harrow J."/>
            <person name="Olson M.V."/>
            <person name="Beck S."/>
            <person name="Rogers J."/>
            <person name="Bentley D.R."/>
        </authorList>
    </citation>
    <scope>NUCLEOTIDE SEQUENCE [LARGE SCALE GENOMIC DNA]</scope>
</reference>
<reference key="5">
    <citation type="submission" date="2005-09" db="EMBL/GenBank/DDBJ databases">
        <authorList>
            <person name="Mural R.J."/>
            <person name="Istrail S."/>
            <person name="Sutton G.G."/>
            <person name="Florea L."/>
            <person name="Halpern A.L."/>
            <person name="Mobarry C.M."/>
            <person name="Lippert R."/>
            <person name="Walenz B."/>
            <person name="Shatkay H."/>
            <person name="Dew I."/>
            <person name="Miller J.R."/>
            <person name="Flanigan M.J."/>
            <person name="Edwards N.J."/>
            <person name="Bolanos R."/>
            <person name="Fasulo D."/>
            <person name="Halldorsson B.V."/>
            <person name="Hannenhalli S."/>
            <person name="Turner R."/>
            <person name="Yooseph S."/>
            <person name="Lu F."/>
            <person name="Nusskern D.R."/>
            <person name="Shue B.C."/>
            <person name="Zheng X.H."/>
            <person name="Zhong F."/>
            <person name="Delcher A.L."/>
            <person name="Huson D.H."/>
            <person name="Kravitz S.A."/>
            <person name="Mouchard L."/>
            <person name="Reinert K."/>
            <person name="Remington K.A."/>
            <person name="Clark A.G."/>
            <person name="Waterman M.S."/>
            <person name="Eichler E.E."/>
            <person name="Adams M.D."/>
            <person name="Hunkapiller M.W."/>
            <person name="Myers E.W."/>
            <person name="Venter J.C."/>
        </authorList>
    </citation>
    <scope>NUCLEOTIDE SEQUENCE [LARGE SCALE GENOMIC DNA]</scope>
</reference>
<reference key="6">
    <citation type="journal article" date="2004" name="Genome Res.">
        <title>The status, quality, and expansion of the NIH full-length cDNA project: the Mammalian Gene Collection (MGC).</title>
        <authorList>
            <consortium name="The MGC Project Team"/>
        </authorList>
    </citation>
    <scope>NUCLEOTIDE SEQUENCE [LARGE SCALE MRNA] (ISOFORMS 1 AND 2)</scope>
    <source>
        <tissue>Brain</tissue>
        <tissue>Lung</tissue>
        <tissue>PNS</tissue>
        <tissue>Testis</tissue>
    </source>
</reference>
<reference key="7">
    <citation type="journal article" date="2017" name="Elife">
        <title>A protein phosphatase network controls the temporal and spatial dynamics of differentiation commitment in human epidermis.</title>
        <authorList>
            <person name="Mishra A."/>
            <person name="Oules B."/>
            <person name="Pisco A.O."/>
            <person name="Ly T."/>
            <person name="Liakath-Ali K."/>
            <person name="Walko G."/>
            <person name="Viswanathan P."/>
            <person name="Tihy M."/>
            <person name="Nijjher J."/>
            <person name="Dunn S.J."/>
            <person name="Lamond A.I."/>
            <person name="Watt F.M."/>
        </authorList>
    </citation>
    <scope>TISSUE SPECIFICITY</scope>
</reference>
<reference key="8">
    <citation type="journal article" date="2006" name="J. Mol. Biol.">
        <title>Crystal structure of the catalytic domain of human MAP kinase phosphatase 5: structural insight into constitutively active phosphatase.</title>
        <authorList>
            <person name="Jeong D.G."/>
            <person name="Yoon T.S."/>
            <person name="Kim J.H."/>
            <person name="Shim M.Y."/>
            <person name="Jung S.K."/>
            <person name="Son J.H."/>
            <person name="Ryu S.E."/>
            <person name="Kim S.J."/>
        </authorList>
    </citation>
    <scope>X-RAY CRYSTALLOGRAPHY (1.6 ANGSTROMS) OF 320-467</scope>
    <scope>CATALYTIC ACTIVITY</scope>
    <scope>SUBUNIT</scope>
    <scope>TISSUE SPECIFICITY</scope>
    <scope>ACTIVE SITE</scope>
</reference>
<reference key="9">
    <citation type="journal article" date="2007" name="Protein Sci.">
        <title>Crystal structure of the MAP kinase binding domain and the catalytic domain of human MKP5.</title>
        <authorList>
            <person name="Tao X."/>
            <person name="Tong L."/>
        </authorList>
    </citation>
    <scope>X-RAY CRYSTALLOGRAPHY (2.2 ANGSTROMS) OF 148-287</scope>
    <scope>SUBUNIT</scope>
    <scope>ACTIVE SITE</scope>
</reference>
<reference key="10">
    <citation type="journal article" date="2011" name="Sci. Signal.">
        <title>A distinct interaction mode revealed by the crystal structure of the kinase p38alpha with the MAPK binding domain of the phosphatase MKP5.</title>
        <authorList>
            <person name="Zhang Y.Y."/>
            <person name="Wu J.W."/>
            <person name="Wang Z.X."/>
        </authorList>
    </citation>
    <scope>X-RAY CRYSTALLOGRAPHY (2.71 ANGSTROMS) OF 139-288 IN COMPLEX WITH MAPK14</scope>
    <scope>FUNCTION</scope>
    <scope>CATALYTIC ACTIVITY</scope>
    <scope>INTERACTION WITH MAPK14</scope>
    <scope>MUTAGENESIS OF 180-PHE-MET-181 AND 203-ARG-ARG-204</scope>
</reference>
<feature type="chain" id="PRO_0000094813" description="Dual specificity protein phosphatase 10">
    <location>
        <begin position="1"/>
        <end position="482"/>
    </location>
</feature>
<feature type="domain" description="Rhodanese" evidence="2">
    <location>
        <begin position="168"/>
        <end position="285"/>
    </location>
</feature>
<feature type="domain" description="Tyrosine-protein phosphatase" evidence="1">
    <location>
        <begin position="321"/>
        <end position="464"/>
    </location>
</feature>
<feature type="region of interest" description="Interaction with MAP kinases">
    <location>
        <begin position="199"/>
        <end position="215"/>
    </location>
</feature>
<feature type="active site" description="Phosphocysteine intermediate" evidence="1 13 14">
    <location>
        <position position="408"/>
    </location>
</feature>
<feature type="splice variant" id="VSP_036549" description="In isoform 2." evidence="10 11">
    <location>
        <begin position="1"/>
        <end position="342"/>
    </location>
</feature>
<feature type="mutagenesis site" description="Reduced enzyme activity with MAPK14." evidence="8">
    <original>FM</original>
    <variation>DD</variation>
    <location>
        <begin position="180"/>
        <end position="181"/>
    </location>
</feature>
<feature type="mutagenesis site" description="Strongly reduced affinity for MAPK14. Almost abolishes enzyme activity with MAPK14." evidence="8">
    <original>RR</original>
    <variation>AA</variation>
    <location>
        <begin position="203"/>
        <end position="204"/>
    </location>
</feature>
<feature type="helix" evidence="16">
    <location>
        <begin position="152"/>
        <end position="160"/>
    </location>
</feature>
<feature type="strand" evidence="16">
    <location>
        <begin position="173"/>
        <end position="176"/>
    </location>
</feature>
<feature type="helix" evidence="16">
    <location>
        <begin position="180"/>
        <end position="185"/>
    </location>
</feature>
<feature type="strand" evidence="16">
    <location>
        <begin position="186"/>
        <end position="188"/>
    </location>
</feature>
<feature type="helix" evidence="16">
    <location>
        <begin position="199"/>
        <end position="206"/>
    </location>
</feature>
<feature type="helix" evidence="16">
    <location>
        <begin position="212"/>
        <end position="217"/>
    </location>
</feature>
<feature type="helix" evidence="16">
    <location>
        <begin position="224"/>
        <end position="230"/>
    </location>
</feature>
<feature type="strand" evidence="16">
    <location>
        <begin position="233"/>
        <end position="236"/>
    </location>
</feature>
<feature type="helix" evidence="16">
    <location>
        <begin position="243"/>
        <end position="245"/>
    </location>
</feature>
<feature type="strand" evidence="18">
    <location>
        <begin position="248"/>
        <end position="250"/>
    </location>
</feature>
<feature type="helix" evidence="16">
    <location>
        <begin position="251"/>
        <end position="261"/>
    </location>
</feature>
<feature type="strand" evidence="16">
    <location>
        <begin position="267"/>
        <end position="269"/>
    </location>
</feature>
<feature type="helix" evidence="16">
    <location>
        <begin position="272"/>
        <end position="276"/>
    </location>
</feature>
<feature type="turn" evidence="16">
    <location>
        <begin position="277"/>
        <end position="279"/>
    </location>
</feature>
<feature type="helix" evidence="16">
    <location>
        <begin position="281"/>
        <end position="283"/>
    </location>
</feature>
<feature type="strand" evidence="16">
    <location>
        <begin position="284"/>
        <end position="286"/>
    </location>
</feature>
<feature type="strand" evidence="15">
    <location>
        <begin position="323"/>
        <end position="326"/>
    </location>
</feature>
<feature type="strand" evidence="15">
    <location>
        <begin position="329"/>
        <end position="332"/>
    </location>
</feature>
<feature type="helix" evidence="15">
    <location>
        <begin position="336"/>
        <end position="338"/>
    </location>
</feature>
<feature type="helix" evidence="15">
    <location>
        <begin position="340"/>
        <end position="345"/>
    </location>
</feature>
<feature type="strand" evidence="15">
    <location>
        <begin position="348"/>
        <end position="353"/>
    </location>
</feature>
<feature type="strand" evidence="15">
    <location>
        <begin position="356"/>
        <end position="358"/>
    </location>
</feature>
<feature type="helix" evidence="15">
    <location>
        <begin position="363"/>
        <end position="365"/>
    </location>
</feature>
<feature type="strand" evidence="15">
    <location>
        <begin position="368"/>
        <end position="372"/>
    </location>
</feature>
<feature type="strand" evidence="15">
    <location>
        <begin position="378"/>
        <end position="380"/>
    </location>
</feature>
<feature type="helix" evidence="15">
    <location>
        <begin position="384"/>
        <end position="386"/>
    </location>
</feature>
<feature type="helix" evidence="15">
    <location>
        <begin position="387"/>
        <end position="399"/>
    </location>
</feature>
<feature type="strand" evidence="15">
    <location>
        <begin position="403"/>
        <end position="407"/>
    </location>
</feature>
<feature type="strand" evidence="15">
    <location>
        <begin position="409"/>
        <end position="413"/>
    </location>
</feature>
<feature type="helix" evidence="15">
    <location>
        <begin position="414"/>
        <end position="426"/>
    </location>
</feature>
<feature type="helix" evidence="15">
    <location>
        <begin position="431"/>
        <end position="441"/>
    </location>
</feature>
<feature type="helix" evidence="15">
    <location>
        <begin position="449"/>
        <end position="463"/>
    </location>
</feature>
<feature type="helix" evidence="17">
    <location>
        <begin position="478"/>
        <end position="482"/>
    </location>
</feature>
<comment type="function">
    <text evidence="4 5 8">Protein phosphatase involved in the inactivation of MAP kinases. Has a specificity for the MAPK11/MAPK12/MAPK13/MAPK14 subfamily. It preferably dephosphorylates p38.</text>
</comment>
<comment type="catalytic activity">
    <reaction evidence="3 6 8">
        <text>O-phospho-L-tyrosyl-[protein] + H2O = L-tyrosyl-[protein] + phosphate</text>
        <dbReference type="Rhea" id="RHEA:10684"/>
        <dbReference type="Rhea" id="RHEA-COMP:10136"/>
        <dbReference type="Rhea" id="RHEA-COMP:20101"/>
        <dbReference type="ChEBI" id="CHEBI:15377"/>
        <dbReference type="ChEBI" id="CHEBI:43474"/>
        <dbReference type="ChEBI" id="CHEBI:46858"/>
        <dbReference type="ChEBI" id="CHEBI:61978"/>
        <dbReference type="EC" id="3.1.3.48"/>
    </reaction>
</comment>
<comment type="catalytic activity">
    <reaction evidence="6 8">
        <text>O-phospho-L-seryl-[protein] + H2O = L-seryl-[protein] + phosphate</text>
        <dbReference type="Rhea" id="RHEA:20629"/>
        <dbReference type="Rhea" id="RHEA-COMP:9863"/>
        <dbReference type="Rhea" id="RHEA-COMP:11604"/>
        <dbReference type="ChEBI" id="CHEBI:15377"/>
        <dbReference type="ChEBI" id="CHEBI:29999"/>
        <dbReference type="ChEBI" id="CHEBI:43474"/>
        <dbReference type="ChEBI" id="CHEBI:83421"/>
        <dbReference type="EC" id="3.1.3.16"/>
    </reaction>
</comment>
<comment type="catalytic activity">
    <reaction evidence="6 8">
        <text>O-phospho-L-threonyl-[protein] + H2O = L-threonyl-[protein] + phosphate</text>
        <dbReference type="Rhea" id="RHEA:47004"/>
        <dbReference type="Rhea" id="RHEA-COMP:11060"/>
        <dbReference type="Rhea" id="RHEA-COMP:11605"/>
        <dbReference type="ChEBI" id="CHEBI:15377"/>
        <dbReference type="ChEBI" id="CHEBI:30013"/>
        <dbReference type="ChEBI" id="CHEBI:43474"/>
        <dbReference type="ChEBI" id="CHEBI:61977"/>
        <dbReference type="EC" id="3.1.3.16"/>
    </reaction>
</comment>
<comment type="subunit">
    <text evidence="6 7 8">Monomer. Interacts with MAPK14.</text>
</comment>
<comment type="interaction">
    <interactant intactId="EBI-3443946">
        <id>Q9Y6W6</id>
    </interactant>
    <interactant intactId="EBI-11954292">
        <id>Q86V38</id>
        <label>ATN1</label>
    </interactant>
    <organismsDiffer>false</organismsDiffer>
    <experiments>3</experiments>
</comment>
<comment type="interaction">
    <interactant intactId="EBI-3443946">
        <id>Q9Y6W6</id>
    </interactant>
    <interactant intactId="EBI-11282723">
        <id>Q9Y5Z0</id>
        <label>BACE2</label>
    </interactant>
    <organismsDiffer>false</organismsDiffer>
    <experiments>3</experiments>
</comment>
<comment type="interaction">
    <interactant intactId="EBI-3443946">
        <id>Q9Y6W6</id>
    </interactant>
    <interactant intactId="EBI-6875961">
        <id>P02489</id>
        <label>CRYAA</label>
    </interactant>
    <organismsDiffer>false</organismsDiffer>
    <experiments>3</experiments>
</comment>
<comment type="interaction">
    <interactant intactId="EBI-3443946">
        <id>Q9Y6W6</id>
    </interactant>
    <interactant intactId="EBI-356015">
        <id>Q14204</id>
        <label>DYNC1H1</label>
    </interactant>
    <organismsDiffer>false</organismsDiffer>
    <experiments>3</experiments>
</comment>
<comment type="interaction">
    <interactant intactId="EBI-3443946">
        <id>Q9Y6W6</id>
    </interactant>
    <interactant intactId="EBI-348399">
        <id>P22607</id>
        <label>FGFR3</label>
    </interactant>
    <organismsDiffer>false</organismsDiffer>
    <experiments>3</experiments>
</comment>
<comment type="interaction">
    <interactant intactId="EBI-3443946">
        <id>Q9Y6W6</id>
    </interactant>
    <interactant intactId="EBI-10242151">
        <id>Q53EP0-3</id>
        <label>FNDC3B</label>
    </interactant>
    <organismsDiffer>false</organismsDiffer>
    <experiments>3</experiments>
</comment>
<comment type="interaction">
    <interactant intactId="EBI-3443946">
        <id>Q9Y6W6</id>
    </interactant>
    <interactant intactId="EBI-8285963">
        <id>Q14957</id>
        <label>GRIN2C</label>
    </interactant>
    <organismsDiffer>false</organismsDiffer>
    <experiments>3</experiments>
</comment>
<comment type="interaction">
    <interactant intactId="EBI-3443946">
        <id>Q9Y6W6</id>
    </interactant>
    <interactant intactId="EBI-351506">
        <id>P06396</id>
        <label>GSN</label>
    </interactant>
    <organismsDiffer>false</organismsDiffer>
    <experiments>3</experiments>
</comment>
<comment type="interaction">
    <interactant intactId="EBI-3443946">
        <id>Q9Y6W6</id>
    </interactant>
    <interactant intactId="EBI-740785">
        <id>P49639</id>
        <label>HOXA1</label>
    </interactant>
    <organismsDiffer>false</organismsDiffer>
    <experiments>5</experiments>
</comment>
<comment type="interaction">
    <interactant intactId="EBI-3443946">
        <id>Q9Y6W6</id>
    </interactant>
    <interactant intactId="EBI-350145">
        <id>P01112</id>
        <label>HRAS</label>
    </interactant>
    <organismsDiffer>false</organismsDiffer>
    <experiments>3</experiments>
</comment>
<comment type="interaction">
    <interactant intactId="EBI-3443946">
        <id>Q9Y6W6</id>
    </interactant>
    <interactant intactId="EBI-751260">
        <id>Q9BYR7</id>
        <label>KRTAP3-2</label>
    </interactant>
    <organismsDiffer>false</organismsDiffer>
    <experiments>3</experiments>
</comment>
<comment type="interaction">
    <interactant intactId="EBI-3443946">
        <id>Q9Y6W6</id>
    </interactant>
    <interactant intactId="EBI-18121963">
        <id>P45983-4</id>
        <label>MAPK8</label>
    </interactant>
    <organismsDiffer>false</organismsDiffer>
    <experiments>3</experiments>
</comment>
<comment type="interaction">
    <interactant intactId="EBI-3443946">
        <id>Q9Y6W6</id>
    </interactant>
    <interactant intactId="EBI-713568">
        <id>P45984</id>
        <label>MAPK9</label>
    </interactant>
    <organismsDiffer>false</organismsDiffer>
    <experiments>5</experiments>
</comment>
<comment type="interaction">
    <interactant intactId="EBI-3443946">
        <id>Q9Y6W6</id>
    </interactant>
    <interactant intactId="EBI-741480">
        <id>Q9UMX0</id>
        <label>UBQLN1</label>
    </interactant>
    <organismsDiffer>false</organismsDiffer>
    <experiments>3</experiments>
</comment>
<comment type="subcellular location">
    <subcellularLocation>
        <location>Cytoplasm</location>
    </subcellularLocation>
    <subcellularLocation>
        <location>Nucleus</location>
    </subcellularLocation>
</comment>
<comment type="alternative products">
    <event type="alternative splicing"/>
    <isoform>
        <id>Q9Y6W6-1</id>
        <name>1</name>
        <sequence type="displayed"/>
    </isoform>
    <isoform>
        <id>Q9Y6W6-2</id>
        <name>2</name>
        <sequence type="described" ref="VSP_036549"/>
    </isoform>
</comment>
<comment type="tissue specificity">
    <text evidence="6 9">Expressed in keratinocytes (at protein level) (PubMed:29043977). Detected in brain (PubMed:16806267).</text>
</comment>
<comment type="similarity">
    <text evidence="12">Belongs to the protein-tyrosine phosphatase family. Non-receptor class dual specificity subfamily.</text>
</comment>
<comment type="online information" name="Atlas of Genetics and Cytogenetics in Oncology and Haematology">
    <link uri="https://atlasgeneticsoncology.org/gene/49913/DUSP10"/>
</comment>
<name>DUS10_HUMAN</name>
<accession>Q9Y6W6</accession>
<accession>D3DTB4</accession>
<accession>Q6GSI4</accession>
<accession>Q9H9Z5</accession>
<keyword id="KW-0002">3D-structure</keyword>
<keyword id="KW-0025">Alternative splicing</keyword>
<keyword id="KW-0963">Cytoplasm</keyword>
<keyword id="KW-0378">Hydrolase</keyword>
<keyword id="KW-0539">Nucleus</keyword>
<keyword id="KW-0904">Protein phosphatase</keyword>
<keyword id="KW-1267">Proteomics identification</keyword>
<keyword id="KW-1185">Reference proteome</keyword>
<sequence length="482" mass="52642">MPPSPLDDRVVVALSRPVRPQDLNLCLDSSYLGSANPGSNSHPPVIATTVVSLKAANLTYMPSSSGSARSLNCGCSSASCCTVATYDKDNQAQTQAIAAGTTTTAIGTSTTCPANQMVNNNENTGSLSPSSGVGSPVSGTPKQLASIKIIYPNDLAKKMTKCSKSHLPSQGPVIIDCRPFMEYNKSHIQGAVHINCADKISRRRLQQGKITVLDLISCREGKDSFKRIFSKEIIVYDENTNEPSRVMPSQPLHIVLESLKREGKEPLVLKGGLSSFKQNHENLCDNSLQLQECREVGGGASAASSLLPQPIPTTPDIENAELTPILPFLFLGNEQDAQDLDTMQRLNIGYVINVTTHLPLYHYEKGLFNYKRLPATDSNKQNLRQYFEEAFEFIEEAHQCGKGLLIHCQAGVSRSATIVIAYLMKHTRMTMTDAYKFVKGKRPIISPNLNFMGQLLEFEEDLNNGVTPRILTPKLMGVETVV</sequence>
<gene>
    <name type="primary">DUSP10</name>
    <name type="synonym">MKP5</name>
</gene>
<organism>
    <name type="scientific">Homo sapiens</name>
    <name type="common">Human</name>
    <dbReference type="NCBI Taxonomy" id="9606"/>
    <lineage>
        <taxon>Eukaryota</taxon>
        <taxon>Metazoa</taxon>
        <taxon>Chordata</taxon>
        <taxon>Craniata</taxon>
        <taxon>Vertebrata</taxon>
        <taxon>Euteleostomi</taxon>
        <taxon>Mammalia</taxon>
        <taxon>Eutheria</taxon>
        <taxon>Euarchontoglires</taxon>
        <taxon>Primates</taxon>
        <taxon>Haplorrhini</taxon>
        <taxon>Catarrhini</taxon>
        <taxon>Hominidae</taxon>
        <taxon>Homo</taxon>
    </lineage>
</organism>
<proteinExistence type="evidence at protein level"/>
<dbReference type="EC" id="3.1.3.16" evidence="6 8"/>
<dbReference type="EC" id="3.1.3.48" evidence="6 8"/>
<dbReference type="EMBL" id="AB026436">
    <property type="protein sequence ID" value="BAA81668.1"/>
    <property type="molecule type" value="mRNA"/>
</dbReference>
<dbReference type="EMBL" id="AF179212">
    <property type="protein sequence ID" value="AAD51857.1"/>
    <property type="molecule type" value="mRNA"/>
</dbReference>
<dbReference type="EMBL" id="AK022513">
    <property type="protein sequence ID" value="BAB14070.1"/>
    <property type="molecule type" value="mRNA"/>
</dbReference>
<dbReference type="EMBL" id="AL590966">
    <property type="status" value="NOT_ANNOTATED_CDS"/>
    <property type="molecule type" value="Genomic_DNA"/>
</dbReference>
<dbReference type="EMBL" id="CH471100">
    <property type="protein sequence ID" value="EAW93283.1"/>
    <property type="molecule type" value="Genomic_DNA"/>
</dbReference>
<dbReference type="EMBL" id="CH471100">
    <property type="protein sequence ID" value="EAW93285.1"/>
    <property type="molecule type" value="Genomic_DNA"/>
</dbReference>
<dbReference type="EMBL" id="CH471100">
    <property type="protein sequence ID" value="EAW93286.1"/>
    <property type="molecule type" value="Genomic_DNA"/>
</dbReference>
<dbReference type="EMBL" id="CH471100">
    <property type="protein sequence ID" value="EAW93287.1"/>
    <property type="molecule type" value="Genomic_DNA"/>
</dbReference>
<dbReference type="EMBL" id="BC020608">
    <property type="protein sequence ID" value="AAH20608.1"/>
    <property type="molecule type" value="mRNA"/>
</dbReference>
<dbReference type="EMBL" id="BC031405">
    <property type="protein sequence ID" value="AAH31405.1"/>
    <property type="molecule type" value="mRNA"/>
</dbReference>
<dbReference type="EMBL" id="BC063826">
    <property type="protein sequence ID" value="AAH63826.1"/>
    <property type="molecule type" value="mRNA"/>
</dbReference>
<dbReference type="CCDS" id="CCDS1528.1">
    <molecule id="Q9Y6W6-1"/>
</dbReference>
<dbReference type="RefSeq" id="NP_009138.1">
    <molecule id="Q9Y6W6-1"/>
    <property type="nucleotide sequence ID" value="NM_007207.6"/>
</dbReference>
<dbReference type="PDB" id="1ZZW">
    <property type="method" value="X-ray"/>
    <property type="resolution" value="1.60 A"/>
    <property type="chains" value="A/B=320-467"/>
</dbReference>
<dbReference type="PDB" id="2OUC">
    <property type="method" value="X-ray"/>
    <property type="resolution" value="2.20 A"/>
    <property type="chains" value="A/B=148-287"/>
</dbReference>
<dbReference type="PDB" id="2OUD">
    <property type="method" value="X-ray"/>
    <property type="resolution" value="2.80 A"/>
    <property type="chains" value="A=315-482"/>
</dbReference>
<dbReference type="PDB" id="3TG1">
    <property type="method" value="X-ray"/>
    <property type="resolution" value="2.71 A"/>
    <property type="chains" value="B=139-288"/>
</dbReference>
<dbReference type="PDB" id="6MC1">
    <property type="method" value="X-ray"/>
    <property type="resolution" value="2.70 A"/>
    <property type="chains" value="A/B/C/D/E/F=320-467"/>
</dbReference>
<dbReference type="PDB" id="7U4O">
    <property type="method" value="X-ray"/>
    <property type="resolution" value="2.30 A"/>
    <property type="chains" value="A/B/C/D/E/F=320-467"/>
</dbReference>
<dbReference type="PDB" id="7U4R">
    <property type="method" value="X-ray"/>
    <property type="resolution" value="3.14 A"/>
    <property type="chains" value="A/B/C/D/E/F=320-467"/>
</dbReference>
<dbReference type="PDB" id="7UMU">
    <property type="method" value="X-ray"/>
    <property type="resolution" value="2.51 A"/>
    <property type="chains" value="A/B/C/D/E/F=320-467"/>
</dbReference>
<dbReference type="PDB" id="7UMV">
    <property type="method" value="X-ray"/>
    <property type="resolution" value="1.80 A"/>
    <property type="chains" value="A=320-467"/>
</dbReference>
<dbReference type="PDB" id="7UN0">
    <property type="method" value="X-ray"/>
    <property type="resolution" value="3.00 A"/>
    <property type="chains" value="A/B/C/D/E/F=320-467"/>
</dbReference>
<dbReference type="PDB" id="7UN4">
    <property type="method" value="X-ray"/>
    <property type="resolution" value="2.70 A"/>
    <property type="chains" value="A/B/C/D/E/F=320-467"/>
</dbReference>
<dbReference type="PDB" id="7Y4B">
    <property type="method" value="X-ray"/>
    <property type="resolution" value="1.86 A"/>
    <property type="chains" value="A/B=320-467"/>
</dbReference>
<dbReference type="PDB" id="7Y4C">
    <property type="method" value="X-ray"/>
    <property type="resolution" value="1.87 A"/>
    <property type="chains" value="A/B/C/D=320-467"/>
</dbReference>
<dbReference type="PDB" id="7Y4D">
    <property type="method" value="X-ray"/>
    <property type="resolution" value="2.18 A"/>
    <property type="chains" value="A/B=320-467"/>
</dbReference>
<dbReference type="PDB" id="7Y4E">
    <property type="method" value="X-ray"/>
    <property type="resolution" value="1.93 A"/>
    <property type="chains" value="A/B=320-467"/>
</dbReference>
<dbReference type="PDBsum" id="1ZZW"/>
<dbReference type="PDBsum" id="2OUC"/>
<dbReference type="PDBsum" id="2OUD"/>
<dbReference type="PDBsum" id="3TG1"/>
<dbReference type="PDBsum" id="6MC1"/>
<dbReference type="PDBsum" id="7U4O"/>
<dbReference type="PDBsum" id="7U4R"/>
<dbReference type="PDBsum" id="7UMU"/>
<dbReference type="PDBsum" id="7UMV"/>
<dbReference type="PDBsum" id="7UN0"/>
<dbReference type="PDBsum" id="7UN4"/>
<dbReference type="PDBsum" id="7Y4B"/>
<dbReference type="PDBsum" id="7Y4C"/>
<dbReference type="PDBsum" id="7Y4D"/>
<dbReference type="PDBsum" id="7Y4E"/>
<dbReference type="SMR" id="Q9Y6W6"/>
<dbReference type="BioGRID" id="116389">
    <property type="interactions" value="69"/>
</dbReference>
<dbReference type="ELM" id="Q9Y6W6"/>
<dbReference type="FunCoup" id="Q9Y6W6">
    <property type="interactions" value="2334"/>
</dbReference>
<dbReference type="IntAct" id="Q9Y6W6">
    <property type="interactions" value="34"/>
</dbReference>
<dbReference type="MINT" id="Q9Y6W6"/>
<dbReference type="STRING" id="9606.ENSP00000355866"/>
<dbReference type="BindingDB" id="Q9Y6W6"/>
<dbReference type="ChEMBL" id="CHEMBL2396511"/>
<dbReference type="DEPOD" id="DUSP10"/>
<dbReference type="iPTMnet" id="Q9Y6W6"/>
<dbReference type="PhosphoSitePlus" id="Q9Y6W6"/>
<dbReference type="BioMuta" id="DUSP10"/>
<dbReference type="DMDM" id="20138090"/>
<dbReference type="MassIVE" id="Q9Y6W6"/>
<dbReference type="PaxDb" id="9606-ENSP00000355866"/>
<dbReference type="PeptideAtlas" id="Q9Y6W6"/>
<dbReference type="ProteomicsDB" id="86803">
    <molecule id="Q9Y6W6-1"/>
</dbReference>
<dbReference type="Antibodypedia" id="20739">
    <property type="antibodies" value="365 antibodies from 35 providers"/>
</dbReference>
<dbReference type="DNASU" id="11221"/>
<dbReference type="Ensembl" id="ENST00000366899.4">
    <molecule id="Q9Y6W6-1"/>
    <property type="protein sequence ID" value="ENSP00000355866.3"/>
    <property type="gene ID" value="ENSG00000143507.18"/>
</dbReference>
<dbReference type="GeneID" id="11221"/>
<dbReference type="KEGG" id="hsa:11221"/>
<dbReference type="MANE-Select" id="ENST00000366899.4">
    <property type="protein sequence ID" value="ENSP00000355866.3"/>
    <property type="RefSeq nucleotide sequence ID" value="NM_007207.6"/>
    <property type="RefSeq protein sequence ID" value="NP_009138.1"/>
</dbReference>
<dbReference type="UCSC" id="uc001hmy.3">
    <molecule id="Q9Y6W6-1"/>
    <property type="organism name" value="human"/>
</dbReference>
<dbReference type="AGR" id="HGNC:3065"/>
<dbReference type="CTD" id="11221"/>
<dbReference type="DisGeNET" id="11221"/>
<dbReference type="GeneCards" id="DUSP10"/>
<dbReference type="HGNC" id="HGNC:3065">
    <property type="gene designation" value="DUSP10"/>
</dbReference>
<dbReference type="HPA" id="ENSG00000143507">
    <property type="expression patterns" value="Tissue enhanced (liver)"/>
</dbReference>
<dbReference type="MIM" id="608867">
    <property type="type" value="gene"/>
</dbReference>
<dbReference type="neXtProt" id="NX_Q9Y6W6"/>
<dbReference type="OpenTargets" id="ENSG00000143507"/>
<dbReference type="PharmGKB" id="PA27520"/>
<dbReference type="VEuPathDB" id="HostDB:ENSG00000143507"/>
<dbReference type="eggNOG" id="KOG1716">
    <property type="taxonomic scope" value="Eukaryota"/>
</dbReference>
<dbReference type="GeneTree" id="ENSGT00940000157671"/>
<dbReference type="HOGENOM" id="CLU_027074_0_1_1"/>
<dbReference type="InParanoid" id="Q9Y6W6"/>
<dbReference type="OMA" id="KKMTKCT"/>
<dbReference type="OrthoDB" id="165342at2759"/>
<dbReference type="PAN-GO" id="Q9Y6W6">
    <property type="GO annotations" value="4 GO annotations based on evolutionary models"/>
</dbReference>
<dbReference type="PhylomeDB" id="Q9Y6W6"/>
<dbReference type="TreeFam" id="TF105122"/>
<dbReference type="BRENDA" id="3.1.3.16">
    <property type="organism ID" value="2681"/>
</dbReference>
<dbReference type="BRENDA" id="3.1.3.48">
    <property type="organism ID" value="2681"/>
</dbReference>
<dbReference type="PathwayCommons" id="Q9Y6W6"/>
<dbReference type="Reactome" id="R-HSA-112409">
    <property type="pathway name" value="RAF-independent MAPK1/3 activation"/>
</dbReference>
<dbReference type="Reactome" id="R-HSA-5675221">
    <property type="pathway name" value="Negative regulation of MAPK pathway"/>
</dbReference>
<dbReference type="Reactome" id="R-HSA-9652817">
    <property type="pathway name" value="Signaling by MAPK mutants"/>
</dbReference>
<dbReference type="SABIO-RK" id="Q9Y6W6"/>
<dbReference type="SignaLink" id="Q9Y6W6"/>
<dbReference type="SIGNOR" id="Q9Y6W6"/>
<dbReference type="BioGRID-ORCS" id="11221">
    <property type="hits" value="30 hits in 1181 CRISPR screens"/>
</dbReference>
<dbReference type="EvolutionaryTrace" id="Q9Y6W6"/>
<dbReference type="GeneWiki" id="DUSP10"/>
<dbReference type="GenomeRNAi" id="11221"/>
<dbReference type="Pharos" id="Q9Y6W6">
    <property type="development level" value="Tbio"/>
</dbReference>
<dbReference type="PRO" id="PR:Q9Y6W6"/>
<dbReference type="Proteomes" id="UP000005640">
    <property type="component" value="Chromosome 1"/>
</dbReference>
<dbReference type="RNAct" id="Q9Y6W6">
    <property type="molecule type" value="protein"/>
</dbReference>
<dbReference type="Bgee" id="ENSG00000143507">
    <property type="expression patterns" value="Expressed in skeletal muscle tissue of rectus abdominis and 190 other cell types or tissues"/>
</dbReference>
<dbReference type="ExpressionAtlas" id="Q9Y6W6">
    <property type="expression patterns" value="baseline and differential"/>
</dbReference>
<dbReference type="GO" id="GO:0005737">
    <property type="term" value="C:cytoplasm"/>
    <property type="evidence" value="ECO:0000314"/>
    <property type="project" value="BHF-UCL"/>
</dbReference>
<dbReference type="GO" id="GO:0005829">
    <property type="term" value="C:cytosol"/>
    <property type="evidence" value="ECO:0000314"/>
    <property type="project" value="HPA"/>
</dbReference>
<dbReference type="GO" id="GO:0005654">
    <property type="term" value="C:nucleoplasm"/>
    <property type="evidence" value="ECO:0000314"/>
    <property type="project" value="HPA"/>
</dbReference>
<dbReference type="GO" id="GO:0005634">
    <property type="term" value="C:nucleus"/>
    <property type="evidence" value="ECO:0000314"/>
    <property type="project" value="BHF-UCL"/>
</dbReference>
<dbReference type="GO" id="GO:0008432">
    <property type="term" value="F:JUN kinase binding"/>
    <property type="evidence" value="ECO:0000314"/>
    <property type="project" value="BHF-UCL"/>
</dbReference>
<dbReference type="GO" id="GO:0033549">
    <property type="term" value="F:MAP kinase phosphatase activity"/>
    <property type="evidence" value="ECO:0000314"/>
    <property type="project" value="UniProtKB"/>
</dbReference>
<dbReference type="GO" id="GO:0033550">
    <property type="term" value="F:MAP kinase tyrosine phosphatase activity"/>
    <property type="evidence" value="ECO:0000318"/>
    <property type="project" value="GO_Central"/>
</dbReference>
<dbReference type="GO" id="GO:0017017">
    <property type="term" value="F:MAP kinase tyrosine/serine/threonine phosphatase activity"/>
    <property type="evidence" value="ECO:0000318"/>
    <property type="project" value="GO_Central"/>
</dbReference>
<dbReference type="GO" id="GO:0048273">
    <property type="term" value="F:mitogen-activated protein kinase p38 binding"/>
    <property type="evidence" value="ECO:0000353"/>
    <property type="project" value="BHF-UCL"/>
</dbReference>
<dbReference type="GO" id="GO:0016791">
    <property type="term" value="F:phosphatase activity"/>
    <property type="evidence" value="ECO:0000314"/>
    <property type="project" value="UniProtKB"/>
</dbReference>
<dbReference type="GO" id="GO:0004722">
    <property type="term" value="F:protein serine/threonine phosphatase activity"/>
    <property type="evidence" value="ECO:0007669"/>
    <property type="project" value="UniProtKB-EC"/>
</dbReference>
<dbReference type="GO" id="GO:0008330">
    <property type="term" value="F:protein tyrosine/threonine phosphatase activity"/>
    <property type="evidence" value="ECO:0000314"/>
    <property type="project" value="BHF-UCL"/>
</dbReference>
<dbReference type="GO" id="GO:0016311">
    <property type="term" value="P:dephosphorylation"/>
    <property type="evidence" value="ECO:0000314"/>
    <property type="project" value="UniProtKB"/>
</dbReference>
<dbReference type="GO" id="GO:0030336">
    <property type="term" value="P:negative regulation of cell migration"/>
    <property type="evidence" value="ECO:0000303"/>
    <property type="project" value="BHF-UCL"/>
</dbReference>
<dbReference type="GO" id="GO:0010633">
    <property type="term" value="P:negative regulation of epithelial cell migration"/>
    <property type="evidence" value="ECO:0000250"/>
    <property type="project" value="BHF-UCL"/>
</dbReference>
<dbReference type="GO" id="GO:0050680">
    <property type="term" value="P:negative regulation of epithelial cell proliferation"/>
    <property type="evidence" value="ECO:0000250"/>
    <property type="project" value="BHF-UCL"/>
</dbReference>
<dbReference type="GO" id="GO:1905042">
    <property type="term" value="P:negative regulation of epithelium regeneration"/>
    <property type="evidence" value="ECO:0000250"/>
    <property type="project" value="BHF-UCL"/>
</dbReference>
<dbReference type="GO" id="GO:0070373">
    <property type="term" value="P:negative regulation of ERK1 and ERK2 cascade"/>
    <property type="evidence" value="ECO:0000250"/>
    <property type="project" value="BHF-UCL"/>
</dbReference>
<dbReference type="GO" id="GO:0046329">
    <property type="term" value="P:negative regulation of JNK cascade"/>
    <property type="evidence" value="ECO:0000314"/>
    <property type="project" value="BHF-UCL"/>
</dbReference>
<dbReference type="GO" id="GO:0048715">
    <property type="term" value="P:negative regulation of oligodendrocyte differentiation"/>
    <property type="evidence" value="ECO:0007669"/>
    <property type="project" value="Ensembl"/>
</dbReference>
<dbReference type="GO" id="GO:1903753">
    <property type="term" value="P:negative regulation of p38MAPK cascade"/>
    <property type="evidence" value="ECO:0000314"/>
    <property type="project" value="BHF-UCL"/>
</dbReference>
<dbReference type="GO" id="GO:0060266">
    <property type="term" value="P:negative regulation of respiratory burst involved in inflammatory response"/>
    <property type="evidence" value="ECO:0007669"/>
    <property type="project" value="Ensembl"/>
</dbReference>
<dbReference type="GO" id="GO:0032873">
    <property type="term" value="P:negative regulation of stress-activated MAPK cascade"/>
    <property type="evidence" value="ECO:0007669"/>
    <property type="project" value="Ensembl"/>
</dbReference>
<dbReference type="GO" id="GO:0048709">
    <property type="term" value="P:oligodendrocyte differentiation"/>
    <property type="evidence" value="ECO:0007669"/>
    <property type="project" value="Ensembl"/>
</dbReference>
<dbReference type="GO" id="GO:0045591">
    <property type="term" value="P:positive regulation of regulatory T cell differentiation"/>
    <property type="evidence" value="ECO:0000315"/>
    <property type="project" value="BHF-UCL"/>
</dbReference>
<dbReference type="GO" id="GO:0002819">
    <property type="term" value="P:regulation of adaptive immune response"/>
    <property type="evidence" value="ECO:0007669"/>
    <property type="project" value="Ensembl"/>
</dbReference>
<dbReference type="GO" id="GO:0090335">
    <property type="term" value="P:regulation of brown fat cell differentiation"/>
    <property type="evidence" value="ECO:0007669"/>
    <property type="project" value="Ensembl"/>
</dbReference>
<dbReference type="GO" id="GO:0032496">
    <property type="term" value="P:response to lipopolysaccharide"/>
    <property type="evidence" value="ECO:0007669"/>
    <property type="project" value="Ensembl"/>
</dbReference>
<dbReference type="GO" id="GO:0007165">
    <property type="term" value="P:signal transduction"/>
    <property type="evidence" value="ECO:0000318"/>
    <property type="project" value="GO_Central"/>
</dbReference>
<dbReference type="GO" id="GO:0051403">
    <property type="term" value="P:stress-activated MAPK cascade"/>
    <property type="evidence" value="ECO:0007669"/>
    <property type="project" value="Ensembl"/>
</dbReference>
<dbReference type="CDD" id="cd14567">
    <property type="entry name" value="DSP_DUSP10"/>
    <property type="match status" value="1"/>
</dbReference>
<dbReference type="CDD" id="cd01446">
    <property type="entry name" value="DSP_MapKP"/>
    <property type="match status" value="1"/>
</dbReference>
<dbReference type="FunFam" id="3.90.190.10:FF:000028">
    <property type="entry name" value="Dual specificity phosphatase 10"/>
    <property type="match status" value="1"/>
</dbReference>
<dbReference type="FunFam" id="3.40.250.10:FF:000013">
    <property type="entry name" value="Dual specificity phosphatase 10 (Predicted)"/>
    <property type="match status" value="1"/>
</dbReference>
<dbReference type="Gene3D" id="3.90.190.10">
    <property type="entry name" value="Protein tyrosine phosphatase superfamily"/>
    <property type="match status" value="1"/>
</dbReference>
<dbReference type="Gene3D" id="3.40.250.10">
    <property type="entry name" value="Rhodanese-like domain"/>
    <property type="match status" value="1"/>
</dbReference>
<dbReference type="InterPro" id="IPR000340">
    <property type="entry name" value="Dual-sp_phosphatase_cat-dom"/>
</dbReference>
<dbReference type="InterPro" id="IPR008343">
    <property type="entry name" value="MKP"/>
</dbReference>
<dbReference type="InterPro" id="IPR029021">
    <property type="entry name" value="Prot-tyrosine_phosphatase-like"/>
</dbReference>
<dbReference type="InterPro" id="IPR001763">
    <property type="entry name" value="Rhodanese-like_dom"/>
</dbReference>
<dbReference type="InterPro" id="IPR036873">
    <property type="entry name" value="Rhodanese-like_dom_sf"/>
</dbReference>
<dbReference type="InterPro" id="IPR016130">
    <property type="entry name" value="Tyr_Pase_AS"/>
</dbReference>
<dbReference type="InterPro" id="IPR000387">
    <property type="entry name" value="Tyr_Pase_dom"/>
</dbReference>
<dbReference type="InterPro" id="IPR020422">
    <property type="entry name" value="TYR_PHOSPHATASE_DUAL_dom"/>
</dbReference>
<dbReference type="PANTHER" id="PTHR10159">
    <property type="entry name" value="DUAL SPECIFICITY PROTEIN PHOSPHATASE"/>
    <property type="match status" value="1"/>
</dbReference>
<dbReference type="PANTHER" id="PTHR10159:SF299">
    <property type="entry name" value="DUAL SPECIFICITY PROTEIN PHOSPHATASE 10"/>
    <property type="match status" value="1"/>
</dbReference>
<dbReference type="Pfam" id="PF00782">
    <property type="entry name" value="DSPc"/>
    <property type="match status" value="1"/>
</dbReference>
<dbReference type="Pfam" id="PF00581">
    <property type="entry name" value="Rhodanese"/>
    <property type="match status" value="1"/>
</dbReference>
<dbReference type="PRINTS" id="PR01908">
    <property type="entry name" value="ADSPHPHTASE"/>
</dbReference>
<dbReference type="PRINTS" id="PR01764">
    <property type="entry name" value="MAPKPHPHTASE"/>
</dbReference>
<dbReference type="SMART" id="SM00195">
    <property type="entry name" value="DSPc"/>
    <property type="match status" value="1"/>
</dbReference>
<dbReference type="SMART" id="SM00450">
    <property type="entry name" value="RHOD"/>
    <property type="match status" value="1"/>
</dbReference>
<dbReference type="SUPFAM" id="SSF52799">
    <property type="entry name" value="(Phosphotyrosine protein) phosphatases II"/>
    <property type="match status" value="1"/>
</dbReference>
<dbReference type="SUPFAM" id="SSF52821">
    <property type="entry name" value="Rhodanese/Cell cycle control phosphatase"/>
    <property type="match status" value="1"/>
</dbReference>
<dbReference type="PROSITE" id="PS50206">
    <property type="entry name" value="RHODANESE_3"/>
    <property type="match status" value="1"/>
</dbReference>
<dbReference type="PROSITE" id="PS00383">
    <property type="entry name" value="TYR_PHOSPHATASE_1"/>
    <property type="match status" value="1"/>
</dbReference>
<dbReference type="PROSITE" id="PS50056">
    <property type="entry name" value="TYR_PHOSPHATASE_2"/>
    <property type="match status" value="1"/>
</dbReference>
<dbReference type="PROSITE" id="PS50054">
    <property type="entry name" value="TYR_PHOSPHATASE_DUAL"/>
    <property type="match status" value="1"/>
</dbReference>
<protein>
    <recommendedName>
        <fullName>Dual specificity protein phosphatase 10</fullName>
        <ecNumber evidence="6 8">3.1.3.16</ecNumber>
        <ecNumber evidence="6 8">3.1.3.48</ecNumber>
    </recommendedName>
    <alternativeName>
        <fullName>Mitogen-activated protein kinase phosphatase 5</fullName>
        <shortName>MAP kinase phosphatase 5</shortName>
        <shortName>MKP-5</shortName>
    </alternativeName>
</protein>